<dbReference type="EC" id="2.5.1.85" evidence="7"/>
<dbReference type="EMBL" id="AB104727">
    <property type="protein sequence ID" value="BAC82428.1"/>
    <property type="molecule type" value="mRNA"/>
</dbReference>
<dbReference type="EMBL" id="AB188498">
    <property type="protein sequence ID" value="BAD88534.1"/>
    <property type="molecule type" value="mRNA"/>
</dbReference>
<dbReference type="EMBL" id="AC007651">
    <property type="protein sequence ID" value="AAD50025.1"/>
    <property type="status" value="ALT_INIT"/>
    <property type="molecule type" value="Genomic_DNA"/>
</dbReference>
<dbReference type="EMBL" id="CP002684">
    <property type="protein sequence ID" value="AEE29535.1"/>
    <property type="molecule type" value="Genomic_DNA"/>
</dbReference>
<dbReference type="EMBL" id="BT028962">
    <property type="protein sequence ID" value="ABI54337.1"/>
    <property type="molecule type" value="mRNA"/>
</dbReference>
<dbReference type="EMBL" id="BT004246">
    <property type="protein sequence ID" value="AAO42250.1"/>
    <property type="molecule type" value="mRNA"/>
</dbReference>
<dbReference type="PIR" id="C86306">
    <property type="entry name" value="C86306"/>
</dbReference>
<dbReference type="RefSeq" id="NP_173148.2">
    <property type="nucleotide sequence ID" value="NM_101565.6"/>
</dbReference>
<dbReference type="SMR" id="Q76FS5"/>
<dbReference type="BioGRID" id="23515">
    <property type="interactions" value="1"/>
</dbReference>
<dbReference type="FunCoup" id="Q76FS5">
    <property type="interactions" value="95"/>
</dbReference>
<dbReference type="STRING" id="3702.Q76FS5"/>
<dbReference type="PaxDb" id="3702-AT1G17050.1"/>
<dbReference type="ProteomicsDB" id="232487"/>
<dbReference type="EnsemblPlants" id="AT1G17050.1">
    <property type="protein sequence ID" value="AT1G17050.1"/>
    <property type="gene ID" value="AT1G17050"/>
</dbReference>
<dbReference type="GeneID" id="838275"/>
<dbReference type="Gramene" id="AT1G17050.1">
    <property type="protein sequence ID" value="AT1G17050.1"/>
    <property type="gene ID" value="AT1G17050"/>
</dbReference>
<dbReference type="KEGG" id="ath:AT1G17050"/>
<dbReference type="Araport" id="AT1G17050"/>
<dbReference type="TAIR" id="AT1G17050">
    <property type="gene designation" value="SPS2"/>
</dbReference>
<dbReference type="eggNOG" id="KOG0776">
    <property type="taxonomic scope" value="Eukaryota"/>
</dbReference>
<dbReference type="HOGENOM" id="CLU_014015_2_2_1"/>
<dbReference type="InParanoid" id="Q76FS5"/>
<dbReference type="OMA" id="HAMWDDY"/>
<dbReference type="OrthoDB" id="9927103at2759"/>
<dbReference type="PhylomeDB" id="Q76FS5"/>
<dbReference type="BioCyc" id="ARA:AT1G17050-MONOMER"/>
<dbReference type="BioCyc" id="MetaCyc:AT1G17050-MONOMER"/>
<dbReference type="BRENDA" id="2.5.1.85">
    <property type="organism ID" value="399"/>
</dbReference>
<dbReference type="PRO" id="PR:Q76FS5"/>
<dbReference type="Proteomes" id="UP000006548">
    <property type="component" value="Chromosome 1"/>
</dbReference>
<dbReference type="ExpressionAtlas" id="Q76FS5">
    <property type="expression patterns" value="baseline and differential"/>
</dbReference>
<dbReference type="GO" id="GO:0009507">
    <property type="term" value="C:chloroplast"/>
    <property type="evidence" value="ECO:0007005"/>
    <property type="project" value="TAIR"/>
</dbReference>
<dbReference type="GO" id="GO:0009570">
    <property type="term" value="C:chloroplast stroma"/>
    <property type="evidence" value="ECO:0007005"/>
    <property type="project" value="TAIR"/>
</dbReference>
<dbReference type="GO" id="GO:0009536">
    <property type="term" value="C:plastid"/>
    <property type="evidence" value="ECO:0000314"/>
    <property type="project" value="TAIR"/>
</dbReference>
<dbReference type="GO" id="GO:0052924">
    <property type="term" value="F:all-trans-nonaprenyl-diphosphate synthase (geranylgeranyl-diphosphate specific) activity"/>
    <property type="evidence" value="ECO:0007669"/>
    <property type="project" value="UniProtKB-EC"/>
</dbReference>
<dbReference type="GO" id="GO:0046872">
    <property type="term" value="F:metal ion binding"/>
    <property type="evidence" value="ECO:0007669"/>
    <property type="project" value="UniProtKB-KW"/>
</dbReference>
<dbReference type="GO" id="GO:0008299">
    <property type="term" value="P:isoprenoid biosynthetic process"/>
    <property type="evidence" value="ECO:0007669"/>
    <property type="project" value="UniProtKB-KW"/>
</dbReference>
<dbReference type="GO" id="GO:0010236">
    <property type="term" value="P:plastoquinone biosynthetic process"/>
    <property type="evidence" value="ECO:0000315"/>
    <property type="project" value="TAIR"/>
</dbReference>
<dbReference type="CDD" id="cd00685">
    <property type="entry name" value="Trans_IPPS_HT"/>
    <property type="match status" value="1"/>
</dbReference>
<dbReference type="FunFam" id="1.10.600.10:FF:000017">
    <property type="entry name" value="Solanesyl-diphosphate synthase 2, chloroplastic"/>
    <property type="match status" value="1"/>
</dbReference>
<dbReference type="Gene3D" id="1.10.600.10">
    <property type="entry name" value="Farnesyl Diphosphate Synthase"/>
    <property type="match status" value="1"/>
</dbReference>
<dbReference type="InterPro" id="IPR008949">
    <property type="entry name" value="Isoprenoid_synthase_dom_sf"/>
</dbReference>
<dbReference type="InterPro" id="IPR000092">
    <property type="entry name" value="Polyprenyl_synt"/>
</dbReference>
<dbReference type="InterPro" id="IPR033749">
    <property type="entry name" value="Polyprenyl_synt_CS"/>
</dbReference>
<dbReference type="NCBIfam" id="TIGR02749">
    <property type="entry name" value="prenyl_cyano"/>
    <property type="match status" value="1"/>
</dbReference>
<dbReference type="PANTHER" id="PTHR12001">
    <property type="entry name" value="GERANYLGERANYL PYROPHOSPHATE SYNTHASE"/>
    <property type="match status" value="1"/>
</dbReference>
<dbReference type="PANTHER" id="PTHR12001:SF79">
    <property type="entry name" value="SOLANESYL DIPHOSPHATE SYNTHASE 2, CHLOROPLASTIC"/>
    <property type="match status" value="1"/>
</dbReference>
<dbReference type="Pfam" id="PF00348">
    <property type="entry name" value="polyprenyl_synt"/>
    <property type="match status" value="1"/>
</dbReference>
<dbReference type="SFLD" id="SFLDS00005">
    <property type="entry name" value="Isoprenoid_Synthase_Type_I"/>
    <property type="match status" value="1"/>
</dbReference>
<dbReference type="SUPFAM" id="SSF48576">
    <property type="entry name" value="Terpenoid synthases"/>
    <property type="match status" value="1"/>
</dbReference>
<dbReference type="PROSITE" id="PS00723">
    <property type="entry name" value="POLYPRENYL_SYNTHASE_1"/>
    <property type="match status" value="1"/>
</dbReference>
<dbReference type="PROSITE" id="PS00444">
    <property type="entry name" value="POLYPRENYL_SYNTHASE_2"/>
    <property type="match status" value="1"/>
</dbReference>
<gene>
    <name evidence="11" type="primary">SPS2</name>
    <name evidence="12" type="synonym">SPPS</name>
    <name evidence="14" type="ordered locus">At1g17050</name>
    <name evidence="15" type="ORF">F20D23.25</name>
</gene>
<reference key="1">
    <citation type="journal article" date="2004" name="Plant Cell Physiol.">
        <title>Identification and subcellular localization of two solanesyl diphosphate synthases from Arabidopsis thaliana.</title>
        <authorList>
            <person name="Luo J."/>
            <person name="Saiki R."/>
            <person name="Tatsumi K."/>
            <person name="Nakagawa T."/>
            <person name="Kawamukai M."/>
        </authorList>
    </citation>
    <scope>NUCLEOTIDE SEQUENCE [MRNA]</scope>
    <scope>FUNCTION</scope>
    <scope>SUBCELLULAR LOCATION</scope>
</reference>
<reference key="2">
    <citation type="journal article" date="2005" name="Biosci. Biotechnol. Biochem.">
        <title>Functional analysis of two solanesyl diphosphate synthases from Arabidopsis thaliana.</title>
        <authorList>
            <person name="Hirooka K."/>
            <person name="Izumi Y."/>
            <person name="An C.I."/>
            <person name="Nakazawa Y."/>
            <person name="Fukusaki E."/>
            <person name="Kobayashi A."/>
        </authorList>
    </citation>
    <scope>NUCLEOTIDE SEQUENCE [MRNA]</scope>
    <scope>FUNCTION</scope>
    <scope>CATALYTIC ACTIVITY</scope>
    <scope>BIOPHYSICOCHEMICAL PROPERTIES</scope>
    <scope>TISSUE SPECIFICITY</scope>
    <scope>SUBCELLULAR LOCATION</scope>
</reference>
<reference key="3">
    <citation type="journal article" date="2000" name="Nature">
        <title>Sequence and analysis of chromosome 1 of the plant Arabidopsis thaliana.</title>
        <authorList>
            <person name="Theologis A."/>
            <person name="Ecker J.R."/>
            <person name="Palm C.J."/>
            <person name="Federspiel N.A."/>
            <person name="Kaul S."/>
            <person name="White O."/>
            <person name="Alonso J."/>
            <person name="Altafi H."/>
            <person name="Araujo R."/>
            <person name="Bowman C.L."/>
            <person name="Brooks S.Y."/>
            <person name="Buehler E."/>
            <person name="Chan A."/>
            <person name="Chao Q."/>
            <person name="Chen H."/>
            <person name="Cheuk R.F."/>
            <person name="Chin C.W."/>
            <person name="Chung M.K."/>
            <person name="Conn L."/>
            <person name="Conway A.B."/>
            <person name="Conway A.R."/>
            <person name="Creasy T.H."/>
            <person name="Dewar K."/>
            <person name="Dunn P."/>
            <person name="Etgu P."/>
            <person name="Feldblyum T.V."/>
            <person name="Feng J.-D."/>
            <person name="Fong B."/>
            <person name="Fujii C.Y."/>
            <person name="Gill J.E."/>
            <person name="Goldsmith A.D."/>
            <person name="Haas B."/>
            <person name="Hansen N.F."/>
            <person name="Hughes B."/>
            <person name="Huizar L."/>
            <person name="Hunter J.L."/>
            <person name="Jenkins J."/>
            <person name="Johnson-Hopson C."/>
            <person name="Khan S."/>
            <person name="Khaykin E."/>
            <person name="Kim C.J."/>
            <person name="Koo H.L."/>
            <person name="Kremenetskaia I."/>
            <person name="Kurtz D.B."/>
            <person name="Kwan A."/>
            <person name="Lam B."/>
            <person name="Langin-Hooper S."/>
            <person name="Lee A."/>
            <person name="Lee J.M."/>
            <person name="Lenz C.A."/>
            <person name="Li J.H."/>
            <person name="Li Y.-P."/>
            <person name="Lin X."/>
            <person name="Liu S.X."/>
            <person name="Liu Z.A."/>
            <person name="Luros J.S."/>
            <person name="Maiti R."/>
            <person name="Marziali A."/>
            <person name="Militscher J."/>
            <person name="Miranda M."/>
            <person name="Nguyen M."/>
            <person name="Nierman W.C."/>
            <person name="Osborne B.I."/>
            <person name="Pai G."/>
            <person name="Peterson J."/>
            <person name="Pham P.K."/>
            <person name="Rizzo M."/>
            <person name="Rooney T."/>
            <person name="Rowley D."/>
            <person name="Sakano H."/>
            <person name="Salzberg S.L."/>
            <person name="Schwartz J.R."/>
            <person name="Shinn P."/>
            <person name="Southwick A.M."/>
            <person name="Sun H."/>
            <person name="Tallon L.J."/>
            <person name="Tambunga G."/>
            <person name="Toriumi M.J."/>
            <person name="Town C.D."/>
            <person name="Utterback T."/>
            <person name="Van Aken S."/>
            <person name="Vaysberg M."/>
            <person name="Vysotskaia V.S."/>
            <person name="Walker M."/>
            <person name="Wu D."/>
            <person name="Yu G."/>
            <person name="Fraser C.M."/>
            <person name="Venter J.C."/>
            <person name="Davis R.W."/>
        </authorList>
    </citation>
    <scope>NUCLEOTIDE SEQUENCE [LARGE SCALE GENOMIC DNA]</scope>
    <source>
        <strain>cv. Columbia</strain>
    </source>
</reference>
<reference key="4">
    <citation type="journal article" date="2017" name="Plant J.">
        <title>Araport11: a complete reannotation of the Arabidopsis thaliana reference genome.</title>
        <authorList>
            <person name="Cheng C.Y."/>
            <person name="Krishnakumar V."/>
            <person name="Chan A.P."/>
            <person name="Thibaud-Nissen F."/>
            <person name="Schobel S."/>
            <person name="Town C.D."/>
        </authorList>
    </citation>
    <scope>GENOME REANNOTATION</scope>
    <source>
        <strain>cv. Columbia</strain>
    </source>
</reference>
<reference key="5">
    <citation type="submission" date="2006-09" db="EMBL/GenBank/DDBJ databases">
        <title>Arabidopsis ORF Clones.</title>
        <authorList>
            <person name="Bautista V.R."/>
            <person name="Kim C.J."/>
            <person name="Chen H."/>
            <person name="Quinitio C."/>
            <person name="Ecker J.R."/>
        </authorList>
    </citation>
    <scope>NUCLEOTIDE SEQUENCE [LARGE SCALE MRNA]</scope>
</reference>
<reference key="6">
    <citation type="journal article" date="2003" name="Science">
        <title>Empirical analysis of transcriptional activity in the Arabidopsis genome.</title>
        <authorList>
            <person name="Yamada K."/>
            <person name="Lim J."/>
            <person name="Dale J.M."/>
            <person name="Chen H."/>
            <person name="Shinn P."/>
            <person name="Palm C.J."/>
            <person name="Southwick A.M."/>
            <person name="Wu H.C."/>
            <person name="Kim C.J."/>
            <person name="Nguyen M."/>
            <person name="Pham P.K."/>
            <person name="Cheuk R.F."/>
            <person name="Karlin-Newmann G."/>
            <person name="Liu S.X."/>
            <person name="Lam B."/>
            <person name="Sakano H."/>
            <person name="Wu T."/>
            <person name="Yu G."/>
            <person name="Miranda M."/>
            <person name="Quach H.L."/>
            <person name="Tripp M."/>
            <person name="Chang C.H."/>
            <person name="Lee J.M."/>
            <person name="Toriumi M.J."/>
            <person name="Chan M.M."/>
            <person name="Tang C.C."/>
            <person name="Onodera C.S."/>
            <person name="Deng J.M."/>
            <person name="Akiyama K."/>
            <person name="Ansari Y."/>
            <person name="Arakawa T."/>
            <person name="Banh J."/>
            <person name="Banno F."/>
            <person name="Bowser L."/>
            <person name="Brooks S.Y."/>
            <person name="Carninci P."/>
            <person name="Chao Q."/>
            <person name="Choy N."/>
            <person name="Enju A."/>
            <person name="Goldsmith A.D."/>
            <person name="Gurjal M."/>
            <person name="Hansen N.F."/>
            <person name="Hayashizaki Y."/>
            <person name="Johnson-Hopson C."/>
            <person name="Hsuan V.W."/>
            <person name="Iida K."/>
            <person name="Karnes M."/>
            <person name="Khan S."/>
            <person name="Koesema E."/>
            <person name="Ishida J."/>
            <person name="Jiang P.X."/>
            <person name="Jones T."/>
            <person name="Kawai J."/>
            <person name="Kamiya A."/>
            <person name="Meyers C."/>
            <person name="Nakajima M."/>
            <person name="Narusaka M."/>
            <person name="Seki M."/>
            <person name="Sakurai T."/>
            <person name="Satou M."/>
            <person name="Tamse R."/>
            <person name="Vaysberg M."/>
            <person name="Wallender E.K."/>
            <person name="Wong C."/>
            <person name="Yamamura Y."/>
            <person name="Yuan S."/>
            <person name="Shinozaki K."/>
            <person name="Davis R.W."/>
            <person name="Theologis A."/>
            <person name="Ecker J.R."/>
        </authorList>
    </citation>
    <scope>NUCLEOTIDE SEQUENCE [LARGE SCALE MRNA] OF 96-417</scope>
    <source>
        <strain>cv. Columbia</strain>
    </source>
</reference>
<reference key="7">
    <citation type="journal article" date="2013" name="J. Biol. Chem.">
        <title>Functional modeling identifies paralogous solanesyl-diphosphate synthases that assemble the side chain of plastoquinone-9 in plastids.</title>
        <authorList>
            <person name="Block A."/>
            <person name="Fristedt R."/>
            <person name="Rogers S."/>
            <person name="Kumar J."/>
            <person name="Barnes B."/>
            <person name="Barnes J."/>
            <person name="Elowsky C.G."/>
            <person name="Wamboldt Y."/>
            <person name="Mackenzie S.A."/>
            <person name="Redding K."/>
            <person name="Merchant S.S."/>
            <person name="Basset G.J."/>
        </authorList>
    </citation>
    <scope>FUNCTION</scope>
    <scope>SUBCELLULAR LOCATION</scope>
    <scope>DISRUPTION PHENOTYPE</scope>
</reference>
<reference key="8">
    <citation type="journal article" date="2015" name="Plant Cell">
        <title>Fibrillin 5 is essential for plastoquinone-9 biosynthesis by binding to solanesyl diphosphate synthases in Arabidopsis.</title>
        <authorList>
            <person name="Kim E.H."/>
            <person name="Lee Y."/>
            <person name="Kim H.U."/>
        </authorList>
    </citation>
    <scope>INTERACTION WITH FBN5</scope>
    <scope>SUBCELLULAR LOCATION</scope>
</reference>
<reference key="9">
    <citation type="journal article" date="2015" name="Sci. Rep.">
        <title>Plant tolerance to excess light energy and photooxidative damage relies on plastoquinone biosynthesis.</title>
        <authorList>
            <person name="Ksas B."/>
            <person name="Becuwe N."/>
            <person name="Chevalier A."/>
            <person name="Havaux M."/>
        </authorList>
    </citation>
    <scope>INDUCTION BY HIGH LIGHT</scope>
</reference>
<keyword id="KW-0150">Chloroplast</keyword>
<keyword id="KW-0414">Isoprene biosynthesis</keyword>
<keyword id="KW-0460">Magnesium</keyword>
<keyword id="KW-0479">Metal-binding</keyword>
<keyword id="KW-0934">Plastid</keyword>
<keyword id="KW-1185">Reference proteome</keyword>
<keyword id="KW-0346">Stress response</keyword>
<keyword id="KW-0808">Transferase</keyword>
<keyword id="KW-0809">Transit peptide</keyword>
<comment type="function">
    <text evidence="7 8 13">Involved in providing solanesyl diphosphate for plastoquinone-9 (PQ-9) formation in plastids (Probable) (PubMed:15784989, PubMed:23913686). Catalyzes the elongation of the prenyl side chain of PQ-9 in plastids (PubMed:23913686). Contributes to the biosynthesis of plastochromanol-8 (PC-8) in plastids (PubMed:23913686). Does not contribute to the synthesis of tocopherol or ubiquinone (PubMed:23913686). PQ-9 and PC-8 are lipophilic antioxidants that act as protectant against photooxidative stress under high light stress conditions (PubMed:23913686). Prefers geranylgeranyl diphosphate to farnesyl diphosphate as substrate (PubMed:15784989). No activity with geranyl diphosphate or dimethylallyl diphosphate as substrate (PubMed:15784989).</text>
</comment>
<comment type="catalytic activity">
    <reaction evidence="7">
        <text>5 isopentenyl diphosphate + (2E,6E,10E)-geranylgeranyl diphosphate = all-trans-nonaprenyl diphosphate + 5 diphosphate</text>
        <dbReference type="Rhea" id="RHEA:27594"/>
        <dbReference type="ChEBI" id="CHEBI:33019"/>
        <dbReference type="ChEBI" id="CHEBI:58391"/>
        <dbReference type="ChEBI" id="CHEBI:58756"/>
        <dbReference type="ChEBI" id="CHEBI:128769"/>
        <dbReference type="EC" id="2.5.1.85"/>
    </reaction>
</comment>
<comment type="cofactor">
    <cofactor evidence="1">
        <name>Mg(2+)</name>
        <dbReference type="ChEBI" id="CHEBI:18420"/>
    </cofactor>
    <text evidence="1">Binds 2 Mg(2+) ions per subunit.</text>
</comment>
<comment type="biophysicochemical properties">
    <kinetics>
        <KM evidence="7">6.89 uM for farnesyl diphosphate (in the presence of 500 uM of isopentenyl diphosphate)</KM>
        <KM evidence="7">0.843 uM for geranylgeranyl diphosphate (in the presence of 100 uM of isopentenyl diphosphate)</KM>
        <KM evidence="7">182 uM for isopentenyl diphosphate (in the presence of 20 uM of farnesyl diphosphate)</KM>
        <KM evidence="7">28.9 uM for isopentenyl diphosphate (in the presence of 4 uM of geranylgeranyl diphosphate)</KM>
        <text>kcat is 3.77 sec(-1) with farnesyl diphosphate as substrate (in the presence of 500 uM of isopentenyl diphosphate). kcat is 2.33 sec(-1) with geranylgeranyl diphosphate as substrate (in the presence of 100 uM of isopentenyl diphosphate). kcat is 2.83 sec(-1) with isopentenyl diphosphate as substrate (in the presence of 20 uM of farnesyl diphosphate). kcat is 1.72 sec(-1) with isopentenyl diphosphate as substrate (in the presence of 4 uM of geranylgeranyl diphosphate).</text>
    </kinetics>
    <phDependence>
        <text evidence="7">Optimum pH is 8.0.</text>
    </phDependence>
</comment>
<comment type="subunit">
    <text evidence="4 10">Homodimer (By similarity). Interacts with FBN5 (PubMed:26432861).</text>
</comment>
<comment type="subcellular location">
    <subcellularLocation>
        <location evidence="6 7 8 10">Plastid</location>
        <location evidence="6 7 8 10">Chloroplast</location>
    </subcellularLocation>
</comment>
<comment type="tissue specificity">
    <text evidence="7">Higher expression in leaves than in roots.</text>
</comment>
<comment type="induction">
    <text evidence="9">Induced by high light conditions.</text>
</comment>
<comment type="disruption phenotype">
    <text evidence="8">Reduced growth (PubMed:23913686). Decreased levels of plastoquinone-9 (PQ-9) and complete loss of plastochromanol-8 (PC-8) in leaves (PubMed:23913686). Severe increase of photoinhibition at high light intensity (PubMed:23913686). The double mutants sps1 and sps2 exhibit an albino phenotype and are devoided of both PQ-9 and PC-8 in cotyledons (PubMed:23913686).</text>
</comment>
<comment type="similarity">
    <text evidence="12">Belongs to the FPP/GGPP synthase family.</text>
</comment>
<comment type="sequence caution" evidence="12">
    <conflict type="erroneous initiation">
        <sequence resource="EMBL-CDS" id="AAD50025"/>
    </conflict>
    <text>Truncated N-terminus.</text>
</comment>
<organism>
    <name type="scientific">Arabidopsis thaliana</name>
    <name type="common">Mouse-ear cress</name>
    <dbReference type="NCBI Taxonomy" id="3702"/>
    <lineage>
        <taxon>Eukaryota</taxon>
        <taxon>Viridiplantae</taxon>
        <taxon>Streptophyta</taxon>
        <taxon>Embryophyta</taxon>
        <taxon>Tracheophyta</taxon>
        <taxon>Spermatophyta</taxon>
        <taxon>Magnoliopsida</taxon>
        <taxon>eudicotyledons</taxon>
        <taxon>Gunneridae</taxon>
        <taxon>Pentapetalae</taxon>
        <taxon>rosids</taxon>
        <taxon>malvids</taxon>
        <taxon>Brassicales</taxon>
        <taxon>Brassicaceae</taxon>
        <taxon>Camelineae</taxon>
        <taxon>Arabidopsis</taxon>
    </lineage>
</organism>
<accession>Q76FS5</accession>
<accession>Q84LG1</accession>
<accession>Q9SHG4</accession>
<sequence>MMMSCRNIDLGTSVLDHSCSSSSTSRRFLFGNSSKTVCMIGGRSCVGNLVFLRRDLATCRAVPAKSKENSLVNGIGQDQTVMLNLRQESRKPISLETLFEVVADDLQRLNDNLLSIVGAENPVLISAAEQIFSAGGKRMRPGLVFLVSRATAELAGLKELTVEHRRLGEIIEMIHTASLIHDDVLDESDMRRGRETVHELFGTRVAVLAGDFMFAQASWYLANLENLEVIKLISQVIKDFASGEIKQASSLFDCDVKLDDYMLKSYYKTASLVAASTKGAAIFSKVESKVAEQMYQFGKNLGLSFQVVDDILDFTQSTEQLGKPAANDLAKGNITAPVIFALENEPRLREIIESEFCEPGSLEEAIEIVRNRGGIKKAQELAKEKAELALKNLNCLPRSGFRSALEDMVMFNLERID</sequence>
<feature type="transit peptide" description="Chloroplast" evidence="5">
    <location>
        <begin position="1"/>
        <end position="60"/>
    </location>
</feature>
<feature type="chain" id="PRO_0000414849" description="Solanesyl diphosphate synthase 2, chloroplastic">
    <location>
        <begin position="61"/>
        <end position="417"/>
    </location>
</feature>
<feature type="binding site" evidence="2">
    <location>
        <position position="137"/>
    </location>
    <ligand>
        <name>isopentenyl diphosphate</name>
        <dbReference type="ChEBI" id="CHEBI:128769"/>
    </ligand>
</feature>
<feature type="binding site" evidence="2">
    <location>
        <position position="140"/>
    </location>
    <ligand>
        <name>isopentenyl diphosphate</name>
        <dbReference type="ChEBI" id="CHEBI:128769"/>
    </ligand>
</feature>
<feature type="binding site" evidence="3">
    <location>
        <position position="175"/>
    </location>
    <ligand>
        <name>isopentenyl diphosphate</name>
        <dbReference type="ChEBI" id="CHEBI:128769"/>
    </ligand>
</feature>
<feature type="binding site" evidence="2">
    <location>
        <position position="182"/>
    </location>
    <ligand>
        <name>Mg(2+)</name>
        <dbReference type="ChEBI" id="CHEBI:18420"/>
        <label>1</label>
    </ligand>
</feature>
<feature type="binding site" evidence="2">
    <location>
        <position position="182"/>
    </location>
    <ligand>
        <name>Mg(2+)</name>
        <dbReference type="ChEBI" id="CHEBI:18420"/>
        <label>2</label>
    </ligand>
</feature>
<feature type="binding site" evidence="2">
    <location>
        <position position="186"/>
    </location>
    <ligand>
        <name>Mg(2+)</name>
        <dbReference type="ChEBI" id="CHEBI:18420"/>
        <label>1</label>
    </ligand>
</feature>
<feature type="binding site" evidence="2">
    <location>
        <position position="186"/>
    </location>
    <ligand>
        <name>Mg(2+)</name>
        <dbReference type="ChEBI" id="CHEBI:18420"/>
        <label>2</label>
    </ligand>
</feature>
<feature type="binding site" evidence="1">
    <location>
        <position position="191"/>
    </location>
    <ligand>
        <name>an all-trans-polyprenyl diphosphate</name>
        <dbReference type="ChEBI" id="CHEBI:58914"/>
    </ligand>
</feature>
<feature type="binding site" evidence="2">
    <location>
        <position position="192"/>
    </location>
    <ligand>
        <name>isopentenyl diphosphate</name>
        <dbReference type="ChEBI" id="CHEBI:128769"/>
    </ligand>
</feature>
<feature type="binding site" evidence="1">
    <location>
        <position position="268"/>
    </location>
    <ligand>
        <name>an all-trans-polyprenyl diphosphate</name>
        <dbReference type="ChEBI" id="CHEBI:58914"/>
    </ligand>
</feature>
<feature type="binding site" evidence="1">
    <location>
        <position position="269"/>
    </location>
    <ligand>
        <name>an all-trans-polyprenyl diphosphate</name>
        <dbReference type="ChEBI" id="CHEBI:58914"/>
    </ligand>
</feature>
<feature type="binding site" evidence="1">
    <location>
        <position position="306"/>
    </location>
    <ligand>
        <name>an all-trans-polyprenyl diphosphate</name>
        <dbReference type="ChEBI" id="CHEBI:58914"/>
    </ligand>
</feature>
<feature type="binding site" evidence="1">
    <location>
        <position position="323"/>
    </location>
    <ligand>
        <name>an all-trans-polyprenyl diphosphate</name>
        <dbReference type="ChEBI" id="CHEBI:58914"/>
    </ligand>
</feature>
<name>SPS2_ARATH</name>
<evidence type="ECO:0000250" key="1"/>
<evidence type="ECO:0000250" key="2">
    <source>
        <dbReference type="UniProtKB" id="P14324"/>
    </source>
</evidence>
<evidence type="ECO:0000250" key="3">
    <source>
        <dbReference type="UniProtKB" id="Q12051"/>
    </source>
</evidence>
<evidence type="ECO:0000250" key="4">
    <source>
        <dbReference type="UniProtKB" id="Q5HZ00"/>
    </source>
</evidence>
<evidence type="ECO:0000255" key="5"/>
<evidence type="ECO:0000269" key="6">
    <source>
    </source>
</evidence>
<evidence type="ECO:0000269" key="7">
    <source>
    </source>
</evidence>
<evidence type="ECO:0000269" key="8">
    <source>
    </source>
</evidence>
<evidence type="ECO:0000269" key="9">
    <source>
    </source>
</evidence>
<evidence type="ECO:0000269" key="10">
    <source>
    </source>
</evidence>
<evidence type="ECO:0000303" key="11">
    <source>
    </source>
</evidence>
<evidence type="ECO:0000305" key="12"/>
<evidence type="ECO:0000305" key="13">
    <source>
    </source>
</evidence>
<evidence type="ECO:0000312" key="14">
    <source>
        <dbReference type="Araport" id="AT1G17050"/>
    </source>
</evidence>
<evidence type="ECO:0000312" key="15">
    <source>
        <dbReference type="EMBL" id="AAD50025.1"/>
    </source>
</evidence>
<protein>
    <recommendedName>
        <fullName evidence="12">Solanesyl diphosphate synthase 2, chloroplastic</fullName>
        <shortName evidence="11">AtSPS2</shortName>
        <ecNumber evidence="7">2.5.1.85</ecNumber>
    </recommendedName>
    <alternativeName>
        <fullName evidence="12">All-trans-nonaprenyl-diphosphate synthase 2 (geranylgeranyl-diphosphate specific)</fullName>
    </alternativeName>
</protein>
<proteinExistence type="evidence at protein level"/>